<feature type="chain" id="PRO_1000117580" description="Elongation factor Ts">
    <location>
        <begin position="1"/>
        <end position="283"/>
    </location>
</feature>
<feature type="region of interest" description="Involved in Mg(2+) ion dislocation from EF-Tu" evidence="1">
    <location>
        <begin position="80"/>
        <end position="83"/>
    </location>
</feature>
<comment type="function">
    <text evidence="1">Associates with the EF-Tu.GDP complex and induces the exchange of GDP to GTP. It remains bound to the aminoacyl-tRNA.EF-Tu.GTP complex up to the GTP hydrolysis stage on the ribosome.</text>
</comment>
<comment type="subcellular location">
    <subcellularLocation>
        <location evidence="1">Cytoplasm</location>
    </subcellularLocation>
</comment>
<comment type="similarity">
    <text evidence="1">Belongs to the EF-Ts family.</text>
</comment>
<keyword id="KW-0963">Cytoplasm</keyword>
<keyword id="KW-0251">Elongation factor</keyword>
<keyword id="KW-0648">Protein biosynthesis</keyword>
<proteinExistence type="inferred from homology"/>
<name>EFTS_ECO81</name>
<dbReference type="EMBL" id="CU928162">
    <property type="protein sequence ID" value="CAR06395.1"/>
    <property type="molecule type" value="Genomic_DNA"/>
</dbReference>
<dbReference type="RefSeq" id="WP_000818114.1">
    <property type="nucleotide sequence ID" value="NC_011745.1"/>
</dbReference>
<dbReference type="SMR" id="B7MP30"/>
<dbReference type="GeneID" id="93777255"/>
<dbReference type="KEGG" id="ecq:ECED1_0176"/>
<dbReference type="HOGENOM" id="CLU_047155_0_2_6"/>
<dbReference type="Proteomes" id="UP000000748">
    <property type="component" value="Chromosome"/>
</dbReference>
<dbReference type="GO" id="GO:0005737">
    <property type="term" value="C:cytoplasm"/>
    <property type="evidence" value="ECO:0007669"/>
    <property type="project" value="UniProtKB-SubCell"/>
</dbReference>
<dbReference type="GO" id="GO:0003746">
    <property type="term" value="F:translation elongation factor activity"/>
    <property type="evidence" value="ECO:0007669"/>
    <property type="project" value="UniProtKB-UniRule"/>
</dbReference>
<dbReference type="CDD" id="cd14275">
    <property type="entry name" value="UBA_EF-Ts"/>
    <property type="match status" value="1"/>
</dbReference>
<dbReference type="FunFam" id="1.10.286.20:FF:000001">
    <property type="entry name" value="Elongation factor Ts"/>
    <property type="match status" value="1"/>
</dbReference>
<dbReference type="FunFam" id="1.10.8.10:FF:000001">
    <property type="entry name" value="Elongation factor Ts"/>
    <property type="match status" value="1"/>
</dbReference>
<dbReference type="FunFam" id="3.30.479.20:FF:000001">
    <property type="entry name" value="Elongation factor Ts"/>
    <property type="match status" value="1"/>
</dbReference>
<dbReference type="Gene3D" id="1.10.286.20">
    <property type="match status" value="1"/>
</dbReference>
<dbReference type="Gene3D" id="1.10.8.10">
    <property type="entry name" value="DNA helicase RuvA subunit, C-terminal domain"/>
    <property type="match status" value="1"/>
</dbReference>
<dbReference type="Gene3D" id="3.30.479.20">
    <property type="entry name" value="Elongation factor Ts, dimerisation domain"/>
    <property type="match status" value="2"/>
</dbReference>
<dbReference type="HAMAP" id="MF_00050">
    <property type="entry name" value="EF_Ts"/>
    <property type="match status" value="1"/>
</dbReference>
<dbReference type="InterPro" id="IPR036402">
    <property type="entry name" value="EF-Ts_dimer_sf"/>
</dbReference>
<dbReference type="InterPro" id="IPR001816">
    <property type="entry name" value="Transl_elong_EFTs/EF1B"/>
</dbReference>
<dbReference type="InterPro" id="IPR014039">
    <property type="entry name" value="Transl_elong_EFTs/EF1B_dimer"/>
</dbReference>
<dbReference type="InterPro" id="IPR018101">
    <property type="entry name" value="Transl_elong_Ts_CS"/>
</dbReference>
<dbReference type="InterPro" id="IPR009060">
    <property type="entry name" value="UBA-like_sf"/>
</dbReference>
<dbReference type="NCBIfam" id="TIGR00116">
    <property type="entry name" value="tsf"/>
    <property type="match status" value="1"/>
</dbReference>
<dbReference type="PANTHER" id="PTHR11741">
    <property type="entry name" value="ELONGATION FACTOR TS"/>
    <property type="match status" value="1"/>
</dbReference>
<dbReference type="PANTHER" id="PTHR11741:SF0">
    <property type="entry name" value="ELONGATION FACTOR TS, MITOCHONDRIAL"/>
    <property type="match status" value="1"/>
</dbReference>
<dbReference type="Pfam" id="PF00889">
    <property type="entry name" value="EF_TS"/>
    <property type="match status" value="1"/>
</dbReference>
<dbReference type="SUPFAM" id="SSF54713">
    <property type="entry name" value="Elongation factor Ts (EF-Ts), dimerisation domain"/>
    <property type="match status" value="2"/>
</dbReference>
<dbReference type="SUPFAM" id="SSF46934">
    <property type="entry name" value="UBA-like"/>
    <property type="match status" value="1"/>
</dbReference>
<dbReference type="PROSITE" id="PS01126">
    <property type="entry name" value="EF_TS_1"/>
    <property type="match status" value="1"/>
</dbReference>
<dbReference type="PROSITE" id="PS01127">
    <property type="entry name" value="EF_TS_2"/>
    <property type="match status" value="1"/>
</dbReference>
<reference key="1">
    <citation type="journal article" date="2009" name="PLoS Genet.">
        <title>Organised genome dynamics in the Escherichia coli species results in highly diverse adaptive paths.</title>
        <authorList>
            <person name="Touchon M."/>
            <person name="Hoede C."/>
            <person name="Tenaillon O."/>
            <person name="Barbe V."/>
            <person name="Baeriswyl S."/>
            <person name="Bidet P."/>
            <person name="Bingen E."/>
            <person name="Bonacorsi S."/>
            <person name="Bouchier C."/>
            <person name="Bouvet O."/>
            <person name="Calteau A."/>
            <person name="Chiapello H."/>
            <person name="Clermont O."/>
            <person name="Cruveiller S."/>
            <person name="Danchin A."/>
            <person name="Diard M."/>
            <person name="Dossat C."/>
            <person name="Karoui M.E."/>
            <person name="Frapy E."/>
            <person name="Garry L."/>
            <person name="Ghigo J.M."/>
            <person name="Gilles A.M."/>
            <person name="Johnson J."/>
            <person name="Le Bouguenec C."/>
            <person name="Lescat M."/>
            <person name="Mangenot S."/>
            <person name="Martinez-Jehanne V."/>
            <person name="Matic I."/>
            <person name="Nassif X."/>
            <person name="Oztas S."/>
            <person name="Petit M.A."/>
            <person name="Pichon C."/>
            <person name="Rouy Z."/>
            <person name="Ruf C.S."/>
            <person name="Schneider D."/>
            <person name="Tourret J."/>
            <person name="Vacherie B."/>
            <person name="Vallenet D."/>
            <person name="Medigue C."/>
            <person name="Rocha E.P.C."/>
            <person name="Denamur E."/>
        </authorList>
    </citation>
    <scope>NUCLEOTIDE SEQUENCE [LARGE SCALE GENOMIC DNA]</scope>
    <source>
        <strain>ED1a</strain>
    </source>
</reference>
<protein>
    <recommendedName>
        <fullName evidence="1">Elongation factor Ts</fullName>
        <shortName evidence="1">EF-Ts</shortName>
    </recommendedName>
</protein>
<sequence>MAEITASLVKELRERTGAGMMDCKKALTEANGDIELAIENMRKSGAIKAAKKAGNVAADGVIKTKIDGNYGIILEVNCQTDFVAKDAGFQAFADKVLDAAVAGKITDVEVLKAQFEEERVALVAKIGENINIRRVAALEGDVLGSYQHGARIGVLVAAKGADEELVKHIAMHVAASKPEFIKPEDVSAEVVEKEYQVQLDIAMQSGKPKEIAEKMVEGRMKKFTGEVSLTGQPFVMEPSKTVGQLLKEHNAEVTGFIRFEVGEGIEKVETDFAAEVAAMSKQS</sequence>
<accession>B7MP30</accession>
<organism>
    <name type="scientific">Escherichia coli O81 (strain ED1a)</name>
    <dbReference type="NCBI Taxonomy" id="585397"/>
    <lineage>
        <taxon>Bacteria</taxon>
        <taxon>Pseudomonadati</taxon>
        <taxon>Pseudomonadota</taxon>
        <taxon>Gammaproteobacteria</taxon>
        <taxon>Enterobacterales</taxon>
        <taxon>Enterobacteriaceae</taxon>
        <taxon>Escherichia</taxon>
    </lineage>
</organism>
<evidence type="ECO:0000255" key="1">
    <source>
        <dbReference type="HAMAP-Rule" id="MF_00050"/>
    </source>
</evidence>
<gene>
    <name evidence="1" type="primary">tsf</name>
    <name type="ordered locus">ECED1_0176</name>
</gene>